<dbReference type="EC" id="2.3.1.35" evidence="1"/>
<dbReference type="EC" id="2.3.1.1" evidence="1"/>
<dbReference type="EMBL" id="CH981533">
    <property type="protein sequence ID" value="EDK47327.1"/>
    <property type="molecule type" value="Genomic_DNA"/>
</dbReference>
<dbReference type="RefSeq" id="XP_001523282.1">
    <property type="nucleotide sequence ID" value="XM_001523232.1"/>
</dbReference>
<dbReference type="SMR" id="A5E7B9"/>
<dbReference type="FunCoup" id="A5E7B9">
    <property type="interactions" value="281"/>
</dbReference>
<dbReference type="STRING" id="379508.A5E7B9"/>
<dbReference type="MEROPS" id="T05.001"/>
<dbReference type="GeneID" id="5230392"/>
<dbReference type="KEGG" id="lel:PVL30_005048"/>
<dbReference type="VEuPathDB" id="FungiDB:LELG_05508"/>
<dbReference type="eggNOG" id="KOG2786">
    <property type="taxonomic scope" value="Eukaryota"/>
</dbReference>
<dbReference type="HOGENOM" id="CLU_027172_1_0_1"/>
<dbReference type="InParanoid" id="A5E7B9"/>
<dbReference type="OMA" id="WGRIVMA"/>
<dbReference type="OrthoDB" id="2017946at2759"/>
<dbReference type="UniPathway" id="UPA00068">
    <property type="reaction ID" value="UER00106"/>
</dbReference>
<dbReference type="UniPathway" id="UPA00068">
    <property type="reaction ID" value="UER00111"/>
</dbReference>
<dbReference type="Proteomes" id="UP000001996">
    <property type="component" value="Unassembled WGS sequence"/>
</dbReference>
<dbReference type="GO" id="GO:0005759">
    <property type="term" value="C:mitochondrial matrix"/>
    <property type="evidence" value="ECO:0007669"/>
    <property type="project" value="UniProtKB-SubCell"/>
</dbReference>
<dbReference type="GO" id="GO:0004358">
    <property type="term" value="F:glutamate N-acetyltransferase activity"/>
    <property type="evidence" value="ECO:0007669"/>
    <property type="project" value="UniProtKB-UniRule"/>
</dbReference>
<dbReference type="GO" id="GO:0004042">
    <property type="term" value="F:L-glutamate N-acetyltransferase activity"/>
    <property type="evidence" value="ECO:0007669"/>
    <property type="project" value="UniProtKB-UniRule"/>
</dbReference>
<dbReference type="GO" id="GO:0006526">
    <property type="term" value="P:L-arginine biosynthetic process"/>
    <property type="evidence" value="ECO:0007669"/>
    <property type="project" value="UniProtKB-UniRule"/>
</dbReference>
<dbReference type="GO" id="GO:0006592">
    <property type="term" value="P:ornithine biosynthetic process"/>
    <property type="evidence" value="ECO:0007669"/>
    <property type="project" value="TreeGrafter"/>
</dbReference>
<dbReference type="CDD" id="cd02152">
    <property type="entry name" value="OAT"/>
    <property type="match status" value="1"/>
</dbReference>
<dbReference type="FunFam" id="3.60.70.12:FF:000001">
    <property type="entry name" value="Arginine biosynthesis bifunctional protein ArgJ, chloroplastic"/>
    <property type="match status" value="1"/>
</dbReference>
<dbReference type="FunFam" id="3.10.20.340:FF:000002">
    <property type="entry name" value="Arginine biosynthesis bifunctional protein ArgJ, mitochondrial"/>
    <property type="match status" value="1"/>
</dbReference>
<dbReference type="FunFam" id="3.30.2330.10:FF:000001">
    <property type="entry name" value="Arginine biosynthesis bifunctional protein ArgJ, mitochondrial"/>
    <property type="match status" value="1"/>
</dbReference>
<dbReference type="Gene3D" id="3.30.2330.10">
    <property type="entry name" value="arginine biosynthesis bifunctional protein suprefamily"/>
    <property type="match status" value="1"/>
</dbReference>
<dbReference type="Gene3D" id="3.10.20.340">
    <property type="entry name" value="ArgJ beta chain, C-terminal domain"/>
    <property type="match status" value="1"/>
</dbReference>
<dbReference type="Gene3D" id="3.60.70.12">
    <property type="entry name" value="L-amino peptidase D-ALA esterase/amidase"/>
    <property type="match status" value="1"/>
</dbReference>
<dbReference type="HAMAP" id="MF_01106">
    <property type="entry name" value="ArgJ"/>
    <property type="match status" value="1"/>
</dbReference>
<dbReference type="InterPro" id="IPR002813">
    <property type="entry name" value="Arg_biosynth_ArgJ"/>
</dbReference>
<dbReference type="InterPro" id="IPR016117">
    <property type="entry name" value="ArgJ-like_dom_sf"/>
</dbReference>
<dbReference type="InterPro" id="IPR042195">
    <property type="entry name" value="ArgJ_beta_C"/>
</dbReference>
<dbReference type="NCBIfam" id="TIGR00120">
    <property type="entry name" value="ArgJ"/>
    <property type="match status" value="1"/>
</dbReference>
<dbReference type="NCBIfam" id="NF003802">
    <property type="entry name" value="PRK05388.1"/>
    <property type="match status" value="1"/>
</dbReference>
<dbReference type="PANTHER" id="PTHR23100">
    <property type="entry name" value="ARGININE BIOSYNTHESIS BIFUNCTIONAL PROTEIN ARGJ"/>
    <property type="match status" value="1"/>
</dbReference>
<dbReference type="PANTHER" id="PTHR23100:SF0">
    <property type="entry name" value="ARGININE BIOSYNTHESIS BIFUNCTIONAL PROTEIN ARGJ, MITOCHONDRIAL"/>
    <property type="match status" value="1"/>
</dbReference>
<dbReference type="Pfam" id="PF01960">
    <property type="entry name" value="ArgJ"/>
    <property type="match status" value="1"/>
</dbReference>
<dbReference type="SUPFAM" id="SSF56266">
    <property type="entry name" value="DmpA/ArgJ-like"/>
    <property type="match status" value="1"/>
</dbReference>
<feature type="chain" id="PRO_0000398060" description="Arginine biosynthesis bifunctional protein ArgJ alpha chain" evidence="1">
    <location>
        <begin position="1"/>
        <end position="214"/>
    </location>
</feature>
<feature type="chain" id="PRO_0000398061" description="Arginine biosynthesis bifunctional protein ArgJ beta chain" evidence="1">
    <location>
        <begin position="215"/>
        <end position="441"/>
    </location>
</feature>
<feature type="active site" description="Nucleophile" evidence="1">
    <location>
        <position position="215"/>
    </location>
</feature>
<feature type="binding site" evidence="1">
    <location>
        <position position="178"/>
    </location>
    <ligand>
        <name>substrate</name>
    </ligand>
</feature>
<feature type="binding site" evidence="1">
    <location>
        <position position="204"/>
    </location>
    <ligand>
        <name>substrate</name>
    </ligand>
</feature>
<feature type="binding site" evidence="1">
    <location>
        <position position="215"/>
    </location>
    <ligand>
        <name>substrate</name>
    </ligand>
</feature>
<feature type="binding site" evidence="1">
    <location>
        <position position="304"/>
    </location>
    <ligand>
        <name>substrate</name>
    </ligand>
</feature>
<feature type="binding site" evidence="1">
    <location>
        <position position="436"/>
    </location>
    <ligand>
        <name>substrate</name>
    </ligand>
</feature>
<feature type="binding site" evidence="1">
    <location>
        <position position="441"/>
    </location>
    <ligand>
        <name>substrate</name>
    </ligand>
</feature>
<feature type="site" description="Involved in the stabilization of negative charge on the oxyanion by the formation of the oxyanion hole" evidence="1">
    <location>
        <position position="138"/>
    </location>
</feature>
<feature type="site" description="Involved in the stabilization of negative charge on the oxyanion by the formation of the oxyanion hole" evidence="1">
    <location>
        <position position="139"/>
    </location>
</feature>
<feature type="site" description="Cleavage; by autolysis" evidence="1">
    <location>
        <begin position="214"/>
        <end position="215"/>
    </location>
</feature>
<sequence length="441" mass="46816">MMKNILLYKVLARYTSTKAARFVPKTGVYPKGYEVGGIHCGVKKDGKTFDLAILHNTHGKDASAAAVFTTNKFKAAPVQVSQKLIKETKGAGINSIVVNSGNANAVTGAQGMKDAEDMVIVTDSVLENKPNSTLVMSTGVIGNNLPIDNILSGIPKLALSHLGNSHQNWIDCATAICTTDTFPKLVSKQFTIGKDTYTLAGLCKGAGMICPNMATLLGFFVTDAPVSPSALQLILKYAVDRSFNSITVDGDMSTNDTIAAIANGAAGGELIDLNSSCAERYAELQKEITDFAQQLAQLVVRDGEGATKFITIKVKDALSYKDAKSIASSVANSSLFKTAMYGKDANWGRILCAIGYADVGNGSVVPQKTSVKFVPVDGSESLQLLQNGEPEKVDEERASEILADEDLVIEIDLGTGGGQGADFWTCDLSHEYVTINGDYRS</sequence>
<organism>
    <name type="scientific">Lodderomyces elongisporus (strain ATCC 11503 / CBS 2605 / JCM 1781 / NBRC 1676 / NRRL YB-4239)</name>
    <name type="common">Yeast</name>
    <name type="synonym">Saccharomyces elongisporus</name>
    <dbReference type="NCBI Taxonomy" id="379508"/>
    <lineage>
        <taxon>Eukaryota</taxon>
        <taxon>Fungi</taxon>
        <taxon>Dikarya</taxon>
        <taxon>Ascomycota</taxon>
        <taxon>Saccharomycotina</taxon>
        <taxon>Pichiomycetes</taxon>
        <taxon>Debaryomycetaceae</taxon>
        <taxon>Candida/Lodderomyces clade</taxon>
        <taxon>Lodderomyces</taxon>
    </lineage>
</organism>
<keyword id="KW-0012">Acyltransferase</keyword>
<keyword id="KW-0028">Amino-acid biosynthesis</keyword>
<keyword id="KW-0055">Arginine biosynthesis</keyword>
<keyword id="KW-0068">Autocatalytic cleavage</keyword>
<keyword id="KW-0496">Mitochondrion</keyword>
<keyword id="KW-0511">Multifunctional enzyme</keyword>
<keyword id="KW-1185">Reference proteome</keyword>
<keyword id="KW-0808">Transferase</keyword>
<reference key="1">
    <citation type="journal article" date="2009" name="Nature">
        <title>Evolution of pathogenicity and sexual reproduction in eight Candida genomes.</title>
        <authorList>
            <person name="Butler G."/>
            <person name="Rasmussen M.D."/>
            <person name="Lin M.F."/>
            <person name="Santos M.A.S."/>
            <person name="Sakthikumar S."/>
            <person name="Munro C.A."/>
            <person name="Rheinbay E."/>
            <person name="Grabherr M."/>
            <person name="Forche A."/>
            <person name="Reedy J.L."/>
            <person name="Agrafioti I."/>
            <person name="Arnaud M.B."/>
            <person name="Bates S."/>
            <person name="Brown A.J.P."/>
            <person name="Brunke S."/>
            <person name="Costanzo M.C."/>
            <person name="Fitzpatrick D.A."/>
            <person name="de Groot P.W.J."/>
            <person name="Harris D."/>
            <person name="Hoyer L.L."/>
            <person name="Hube B."/>
            <person name="Klis F.M."/>
            <person name="Kodira C."/>
            <person name="Lennard N."/>
            <person name="Logue M.E."/>
            <person name="Martin R."/>
            <person name="Neiman A.M."/>
            <person name="Nikolaou E."/>
            <person name="Quail M.A."/>
            <person name="Quinn J."/>
            <person name="Santos M.C."/>
            <person name="Schmitzberger F.F."/>
            <person name="Sherlock G."/>
            <person name="Shah P."/>
            <person name="Silverstein K.A.T."/>
            <person name="Skrzypek M.S."/>
            <person name="Soll D."/>
            <person name="Staggs R."/>
            <person name="Stansfield I."/>
            <person name="Stumpf M.P.H."/>
            <person name="Sudbery P.E."/>
            <person name="Srikantha T."/>
            <person name="Zeng Q."/>
            <person name="Berman J."/>
            <person name="Berriman M."/>
            <person name="Heitman J."/>
            <person name="Gow N.A.R."/>
            <person name="Lorenz M.C."/>
            <person name="Birren B.W."/>
            <person name="Kellis M."/>
            <person name="Cuomo C.A."/>
        </authorList>
    </citation>
    <scope>NUCLEOTIDE SEQUENCE [LARGE SCALE GENOMIC DNA]</scope>
    <source>
        <strain>ATCC 11503 / BCRC 21390 / CBS 2605 / JCM 1781 / NBRC 1676 / NRRL YB-4239</strain>
    </source>
</reference>
<comment type="function">
    <text evidence="1">Catalyzes two activities which are involved in the cyclic version of arginine biosynthesis: the synthesis of acetylglutamate from glutamate and acetyl-CoA, and of ornithine by transacetylation between acetylornithine and glutamate.</text>
</comment>
<comment type="catalytic activity">
    <reaction evidence="1">
        <text>N(2)-acetyl-L-ornithine + L-glutamate = N-acetyl-L-glutamate + L-ornithine</text>
        <dbReference type="Rhea" id="RHEA:15349"/>
        <dbReference type="ChEBI" id="CHEBI:29985"/>
        <dbReference type="ChEBI" id="CHEBI:44337"/>
        <dbReference type="ChEBI" id="CHEBI:46911"/>
        <dbReference type="ChEBI" id="CHEBI:57805"/>
        <dbReference type="EC" id="2.3.1.35"/>
    </reaction>
</comment>
<comment type="catalytic activity">
    <reaction evidence="1">
        <text>L-glutamate + acetyl-CoA = N-acetyl-L-glutamate + CoA + H(+)</text>
        <dbReference type="Rhea" id="RHEA:24292"/>
        <dbReference type="ChEBI" id="CHEBI:15378"/>
        <dbReference type="ChEBI" id="CHEBI:29985"/>
        <dbReference type="ChEBI" id="CHEBI:44337"/>
        <dbReference type="ChEBI" id="CHEBI:57287"/>
        <dbReference type="ChEBI" id="CHEBI:57288"/>
        <dbReference type="EC" id="2.3.1.1"/>
    </reaction>
</comment>
<comment type="pathway">
    <text evidence="1">Amino-acid biosynthesis; L-arginine biosynthesis; L-ornithine and N-acetyl-L-glutamate from L-glutamate and N(2)-acetyl-L-ornithine (cyclic): step 1/1.</text>
</comment>
<comment type="pathway">
    <text evidence="1">Amino-acid biosynthesis; L-arginine biosynthesis; N(2)-acetyl-L-ornithine from L-glutamate: step 1/4.</text>
</comment>
<comment type="subunit">
    <text evidence="1">Heterodimer of an alpha and a beta chain.</text>
</comment>
<comment type="subcellular location">
    <subcellularLocation>
        <location evidence="1">Mitochondrion matrix</location>
    </subcellularLocation>
</comment>
<comment type="PTM">
    <text evidence="1">The alpha and beta chains are autoproteolytically processed from a single precursor protein within the mitochondrion.</text>
</comment>
<comment type="miscellaneous">
    <text evidence="1">This protein may be expected to contain an N-terminal transit peptide but none has been predicted.</text>
</comment>
<comment type="similarity">
    <text evidence="1">Belongs to the ArgJ family.</text>
</comment>
<protein>
    <recommendedName>
        <fullName evidence="1">Arginine biosynthesis bifunctional protein ArgJ, mitochondrial</fullName>
    </recommendedName>
    <domain>
        <recommendedName>
            <fullName evidence="1">Glutamate N-acetyltransferase</fullName>
            <shortName evidence="1">GAT</shortName>
            <ecNumber evidence="1">2.3.1.35</ecNumber>
        </recommendedName>
        <alternativeName>
            <fullName evidence="1">Ornithine acetyltransferase</fullName>
            <shortName evidence="1">OATase</shortName>
        </alternativeName>
        <alternativeName>
            <fullName evidence="1">Ornithine transacetylase</fullName>
        </alternativeName>
    </domain>
    <domain>
        <recommendedName>
            <fullName evidence="1">Amino-acid acetyltransferase</fullName>
            <ecNumber evidence="1">2.3.1.1</ecNumber>
        </recommendedName>
        <alternativeName>
            <fullName evidence="1">N-acetylglutamate synthase</fullName>
            <shortName evidence="1">AGS</shortName>
        </alternativeName>
    </domain>
    <component>
        <recommendedName>
            <fullName evidence="1">Arginine biosynthesis bifunctional protein ArgJ alpha chain</fullName>
        </recommendedName>
    </component>
    <component>
        <recommendedName>
            <fullName evidence="1">Arginine biosynthesis bifunctional protein ArgJ beta chain</fullName>
        </recommendedName>
    </component>
</protein>
<gene>
    <name type="ORF">LELG_05508</name>
</gene>
<accession>A5E7B9</accession>
<name>ARGJ_LODEL</name>
<evidence type="ECO:0000255" key="1">
    <source>
        <dbReference type="HAMAP-Rule" id="MF_03124"/>
    </source>
</evidence>
<proteinExistence type="inferred from homology"/>